<reference key="1">
    <citation type="journal article" date="2010" name="ISME J.">
        <title>The complete genome sequence of the algal symbiont Dinoroseobacter shibae: a hitchhiker's guide to life in the sea.</title>
        <authorList>
            <person name="Wagner-Dobler I."/>
            <person name="Ballhausen B."/>
            <person name="Berger M."/>
            <person name="Brinkhoff T."/>
            <person name="Buchholz I."/>
            <person name="Bunk B."/>
            <person name="Cypionka H."/>
            <person name="Daniel R."/>
            <person name="Drepper T."/>
            <person name="Gerdts G."/>
            <person name="Hahnke S."/>
            <person name="Han C."/>
            <person name="Jahn D."/>
            <person name="Kalhoefer D."/>
            <person name="Kiss H."/>
            <person name="Klenk H.P."/>
            <person name="Kyrpides N."/>
            <person name="Liebl W."/>
            <person name="Liesegang H."/>
            <person name="Meincke L."/>
            <person name="Pati A."/>
            <person name="Petersen J."/>
            <person name="Piekarski T."/>
            <person name="Pommerenke C."/>
            <person name="Pradella S."/>
            <person name="Pukall R."/>
            <person name="Rabus R."/>
            <person name="Stackebrandt E."/>
            <person name="Thole S."/>
            <person name="Thompson L."/>
            <person name="Tielen P."/>
            <person name="Tomasch J."/>
            <person name="von Jan M."/>
            <person name="Wanphrut N."/>
            <person name="Wichels A."/>
            <person name="Zech H."/>
            <person name="Simon M."/>
        </authorList>
    </citation>
    <scope>NUCLEOTIDE SEQUENCE [LARGE SCALE GENOMIC DNA]</scope>
    <source>
        <strain>DSM 16493 / NCIMB 14021 / DFL 12</strain>
    </source>
</reference>
<feature type="signal peptide" evidence="1">
    <location>
        <begin position="1"/>
        <end position="24"/>
    </location>
</feature>
<feature type="chain" id="PRO_5000280757" description="Tol-Pal system protein TolB" evidence="1">
    <location>
        <begin position="25"/>
        <end position="446"/>
    </location>
</feature>
<protein>
    <recommendedName>
        <fullName evidence="1">Tol-Pal system protein TolB</fullName>
    </recommendedName>
</protein>
<sequence>MKRAFLSALSVGLAALFLTGPAQAQGNPGPLRIEITEGVIEPLPIAVPPFLAETPAASQFARDIAQVVADDLEGSGLFRAIPENAFISPITSFDSPVQYADWKAINAQALVTGSVSVASDGRLVVKFRLFDVFSDAPLGKGLQFVASQSSWRRMGHKVADAVYSRITGEGGYFDSRVVFVSETGPKNARQKRLAIMDYDGANVQFLTDSSAIVLAPRFSPTGDRVLYTSYATGRPQITLLDVNSVRSQGLGSAQGGEMSFAPRFSPDGRSVVFSLTNGGNSDIYRRDLSSGAQTRLTATPAIETAPSFSPDGRQIVFESDRSGSQQLYVMSATGGEARRISFGPGRYGTPVWSPRGDLIAFTKQNQGRFHIGVMRTDGSEERLLTSSFLDESPTWSPNGRVIMFTRETSGAGGAPSLYSVDISGRNLRRVPTPGAASDPAWSPLLP</sequence>
<proteinExistence type="inferred from homology"/>
<evidence type="ECO:0000255" key="1">
    <source>
        <dbReference type="HAMAP-Rule" id="MF_00671"/>
    </source>
</evidence>
<accession>A8LHQ6</accession>
<dbReference type="EMBL" id="CP000830">
    <property type="protein sequence ID" value="ABV92853.1"/>
    <property type="molecule type" value="Genomic_DNA"/>
</dbReference>
<dbReference type="RefSeq" id="WP_012177784.1">
    <property type="nucleotide sequence ID" value="NC_009952.1"/>
</dbReference>
<dbReference type="SMR" id="A8LHQ6"/>
<dbReference type="STRING" id="398580.Dshi_1111"/>
<dbReference type="KEGG" id="dsh:Dshi_1111"/>
<dbReference type="eggNOG" id="COG0823">
    <property type="taxonomic scope" value="Bacteria"/>
</dbReference>
<dbReference type="HOGENOM" id="CLU_047123_0_0_5"/>
<dbReference type="OrthoDB" id="9802240at2"/>
<dbReference type="Proteomes" id="UP000006833">
    <property type="component" value="Chromosome"/>
</dbReference>
<dbReference type="GO" id="GO:0042597">
    <property type="term" value="C:periplasmic space"/>
    <property type="evidence" value="ECO:0007669"/>
    <property type="project" value="UniProtKB-SubCell"/>
</dbReference>
<dbReference type="GO" id="GO:0051301">
    <property type="term" value="P:cell division"/>
    <property type="evidence" value="ECO:0007669"/>
    <property type="project" value="UniProtKB-UniRule"/>
</dbReference>
<dbReference type="GO" id="GO:0017038">
    <property type="term" value="P:protein import"/>
    <property type="evidence" value="ECO:0007669"/>
    <property type="project" value="InterPro"/>
</dbReference>
<dbReference type="Gene3D" id="2.120.10.30">
    <property type="entry name" value="TolB, C-terminal domain"/>
    <property type="match status" value="1"/>
</dbReference>
<dbReference type="Gene3D" id="3.40.50.10070">
    <property type="entry name" value="TolB, N-terminal domain"/>
    <property type="match status" value="1"/>
</dbReference>
<dbReference type="HAMAP" id="MF_00671">
    <property type="entry name" value="TolB"/>
    <property type="match status" value="1"/>
</dbReference>
<dbReference type="InterPro" id="IPR011042">
    <property type="entry name" value="6-blade_b-propeller_TolB-like"/>
</dbReference>
<dbReference type="InterPro" id="IPR011659">
    <property type="entry name" value="PD40"/>
</dbReference>
<dbReference type="InterPro" id="IPR014167">
    <property type="entry name" value="Tol-Pal_TolB"/>
</dbReference>
<dbReference type="InterPro" id="IPR007195">
    <property type="entry name" value="TolB_N"/>
</dbReference>
<dbReference type="NCBIfam" id="TIGR02800">
    <property type="entry name" value="propeller_TolB"/>
    <property type="match status" value="1"/>
</dbReference>
<dbReference type="PANTHER" id="PTHR36842:SF1">
    <property type="entry name" value="PROTEIN TOLB"/>
    <property type="match status" value="1"/>
</dbReference>
<dbReference type="PANTHER" id="PTHR36842">
    <property type="entry name" value="PROTEIN TOLB HOMOLOG"/>
    <property type="match status" value="1"/>
</dbReference>
<dbReference type="Pfam" id="PF07676">
    <property type="entry name" value="PD40"/>
    <property type="match status" value="5"/>
</dbReference>
<dbReference type="Pfam" id="PF04052">
    <property type="entry name" value="TolB_N"/>
    <property type="match status" value="1"/>
</dbReference>
<dbReference type="SUPFAM" id="SSF52964">
    <property type="entry name" value="TolB, N-terminal domain"/>
    <property type="match status" value="1"/>
</dbReference>
<dbReference type="SUPFAM" id="SSF69304">
    <property type="entry name" value="Tricorn protease N-terminal domain"/>
    <property type="match status" value="1"/>
</dbReference>
<keyword id="KW-0131">Cell cycle</keyword>
<keyword id="KW-0132">Cell division</keyword>
<keyword id="KW-0574">Periplasm</keyword>
<keyword id="KW-1185">Reference proteome</keyword>
<keyword id="KW-0732">Signal</keyword>
<organism>
    <name type="scientific">Dinoroseobacter shibae (strain DSM 16493 / NCIMB 14021 / DFL 12)</name>
    <dbReference type="NCBI Taxonomy" id="398580"/>
    <lineage>
        <taxon>Bacteria</taxon>
        <taxon>Pseudomonadati</taxon>
        <taxon>Pseudomonadota</taxon>
        <taxon>Alphaproteobacteria</taxon>
        <taxon>Rhodobacterales</taxon>
        <taxon>Roseobacteraceae</taxon>
        <taxon>Dinoroseobacter</taxon>
    </lineage>
</organism>
<gene>
    <name evidence="1" type="primary">tolB</name>
    <name type="ordered locus">Dshi_1111</name>
</gene>
<comment type="function">
    <text evidence="1">Part of the Tol-Pal system, which plays a role in outer membrane invagination during cell division and is important for maintaining outer membrane integrity.</text>
</comment>
<comment type="subunit">
    <text evidence="1">The Tol-Pal system is composed of five core proteins: the inner membrane proteins TolA, TolQ and TolR, the periplasmic protein TolB and the outer membrane protein Pal. They form a network linking the inner and outer membranes and the peptidoglycan layer.</text>
</comment>
<comment type="subcellular location">
    <subcellularLocation>
        <location evidence="1">Periplasm</location>
    </subcellularLocation>
</comment>
<comment type="similarity">
    <text evidence="1">Belongs to the TolB family.</text>
</comment>
<name>TOLB_DINSH</name>